<comment type="function">
    <text evidence="1">Protease with a carboxypeptidase B-like function involved in the C-terminal processing of the lysine and arginine residues from protein precursors. Promotes cell fusion and is involved in the programmed cell death (By similarity).</text>
</comment>
<comment type="catalytic activity">
    <reaction>
        <text>Preferential release of a C-terminal arginine or lysine residue.</text>
        <dbReference type="EC" id="3.4.16.6"/>
    </reaction>
</comment>
<comment type="subcellular location">
    <subcellularLocation>
        <location evidence="1">Golgi apparatus</location>
        <location evidence="1">trans-Golgi network membrane</location>
        <topology evidence="1">Single-pass type I membrane protein</topology>
    </subcellularLocation>
</comment>
<comment type="similarity">
    <text evidence="5">Belongs to the peptidase S10 family.</text>
</comment>
<keyword id="KW-0053">Apoptosis</keyword>
<keyword id="KW-0121">Carboxypeptidase</keyword>
<keyword id="KW-0325">Glycoprotein</keyword>
<keyword id="KW-0333">Golgi apparatus</keyword>
<keyword id="KW-0378">Hydrolase</keyword>
<keyword id="KW-0472">Membrane</keyword>
<keyword id="KW-0645">Protease</keyword>
<keyword id="KW-1185">Reference proteome</keyword>
<keyword id="KW-0732">Signal</keyword>
<keyword id="KW-0812">Transmembrane</keyword>
<keyword id="KW-1133">Transmembrane helix</keyword>
<sequence length="707" mass="80574">MLLSVFIILINTLFVLAIPPKEGSDNNPSKKYLVTDLPGLYENVKPKISVPLMFSGQLELYPENNTHYFFWKFVDSELNQDTSKKTIFWLNGGPGCSSMDGALLETGPFRIDENEKVIYNNGSWHKFGDIIYVDQPAGTGFSFTNEYITDLDQVAWYFLKFMEEYYKLFPNEINNEIYFAGESYAGQYIPYIADAILKRNKNLKENDVKYDLKGILIGNGWVSPNQQSLSYLPFFINHGLIDKSHPRWGSLLSKHEKCQKIVNKIDGHFDEADVHPYEVNSATCESILTDLLNYSQDRESDSDHRCINMYDYTLRDSYPSCGMNWPFELKYVAPFLRKEEVMHDLNLVDLKYWRECSGKVGRMFGARNSLPAVHLLPNISQEIPIILFNGANDIICNSDGVLSYLDKLQWGGKVGFTNKDDQINWIYDNKEVGYILMERNISFINIYNSSHMVPYDLPDVSRALMDLVSGKYEEKEKDGKREFITYPLGEVRNKLGQEIPADESSKPIEDKPDDKPIEDKPEETKPEQTKPEDETSSSTSEIIPTSEASFIPEPEESTSSKFTRLIQLGVIFIIFWGVYILYVSYRARPSSIIKKPARSTNSSGRKKNVQWADQLNRFEEDENELGSPPPQGIIAKTISKITGNTSNRGRYAPAGDGSREFTDDIELGEGISDPNVDEFIIGSDDDEDDDEDVETHEGNPKKTESKS</sequence>
<name>KEX1_CANTT</name>
<gene>
    <name type="primary">KEX1</name>
    <name type="ORF">CTRG_04891</name>
</gene>
<evidence type="ECO:0000250" key="1"/>
<evidence type="ECO:0000255" key="2"/>
<evidence type="ECO:0000255" key="3">
    <source>
        <dbReference type="PROSITE-ProRule" id="PRU10075"/>
    </source>
</evidence>
<evidence type="ECO:0000256" key="4">
    <source>
        <dbReference type="SAM" id="MobiDB-lite"/>
    </source>
</evidence>
<evidence type="ECO:0000305" key="5"/>
<proteinExistence type="inferred from homology"/>
<organism>
    <name type="scientific">Candida tropicalis (strain ATCC MYA-3404 / T1)</name>
    <name type="common">Yeast</name>
    <dbReference type="NCBI Taxonomy" id="294747"/>
    <lineage>
        <taxon>Eukaryota</taxon>
        <taxon>Fungi</taxon>
        <taxon>Dikarya</taxon>
        <taxon>Ascomycota</taxon>
        <taxon>Saccharomycotina</taxon>
        <taxon>Pichiomycetes</taxon>
        <taxon>Debaryomycetaceae</taxon>
        <taxon>Candida/Lodderomyces clade</taxon>
        <taxon>Candida</taxon>
    </lineage>
</organism>
<feature type="signal peptide" evidence="2">
    <location>
        <begin position="1"/>
        <end position="17"/>
    </location>
</feature>
<feature type="chain" id="PRO_0000411911" description="Pheromone-processing carboxypeptidase KEX1">
    <location>
        <begin position="18"/>
        <end position="707"/>
    </location>
</feature>
<feature type="topological domain" description="Lumenal" evidence="2">
    <location>
        <begin position="18"/>
        <end position="564"/>
    </location>
</feature>
<feature type="transmembrane region" description="Helical" evidence="2">
    <location>
        <begin position="565"/>
        <end position="585"/>
    </location>
</feature>
<feature type="topological domain" description="Cytoplasmic" evidence="2">
    <location>
        <begin position="586"/>
        <end position="707"/>
    </location>
</feature>
<feature type="region of interest" description="Disordered" evidence="4">
    <location>
        <begin position="496"/>
        <end position="557"/>
    </location>
</feature>
<feature type="region of interest" description="Disordered" evidence="4">
    <location>
        <begin position="644"/>
        <end position="707"/>
    </location>
</feature>
<feature type="compositionally biased region" description="Basic and acidic residues" evidence="4">
    <location>
        <begin position="503"/>
        <end position="533"/>
    </location>
</feature>
<feature type="compositionally biased region" description="Low complexity" evidence="4">
    <location>
        <begin position="536"/>
        <end position="549"/>
    </location>
</feature>
<feature type="compositionally biased region" description="Acidic residues" evidence="4">
    <location>
        <begin position="683"/>
        <end position="694"/>
    </location>
</feature>
<feature type="compositionally biased region" description="Basic and acidic residues" evidence="4">
    <location>
        <begin position="695"/>
        <end position="707"/>
    </location>
</feature>
<feature type="active site" evidence="3">
    <location>
        <position position="183"/>
    </location>
</feature>
<feature type="active site" evidence="3">
    <location>
        <position position="393"/>
    </location>
</feature>
<feature type="active site" evidence="3">
    <location>
        <position position="451"/>
    </location>
</feature>
<feature type="glycosylation site" description="N-linked (GlcNAc...) asparagine" evidence="2">
    <location>
        <position position="64"/>
    </location>
</feature>
<feature type="glycosylation site" description="N-linked (GlcNAc...) asparagine" evidence="2">
    <location>
        <position position="121"/>
    </location>
</feature>
<feature type="glycosylation site" description="N-linked (GlcNAc...) asparagine" evidence="2">
    <location>
        <position position="293"/>
    </location>
</feature>
<feature type="glycosylation site" description="N-linked (GlcNAc...) asparagine" evidence="2">
    <location>
        <position position="378"/>
    </location>
</feature>
<feature type="glycosylation site" description="N-linked (GlcNAc...) asparagine" evidence="2">
    <location>
        <position position="440"/>
    </location>
</feature>
<feature type="glycosylation site" description="N-linked (GlcNAc...) asparagine" evidence="2">
    <location>
        <position position="448"/>
    </location>
</feature>
<protein>
    <recommendedName>
        <fullName>Pheromone-processing carboxypeptidase KEX1</fullName>
        <ecNumber>3.4.16.6</ecNumber>
    </recommendedName>
    <alternativeName>
        <fullName>Carboxypeptidase D</fullName>
    </alternativeName>
</protein>
<reference key="1">
    <citation type="journal article" date="2009" name="Nature">
        <title>Evolution of pathogenicity and sexual reproduction in eight Candida genomes.</title>
        <authorList>
            <person name="Butler G."/>
            <person name="Rasmussen M.D."/>
            <person name="Lin M.F."/>
            <person name="Santos M.A.S."/>
            <person name="Sakthikumar S."/>
            <person name="Munro C.A."/>
            <person name="Rheinbay E."/>
            <person name="Grabherr M."/>
            <person name="Forche A."/>
            <person name="Reedy J.L."/>
            <person name="Agrafioti I."/>
            <person name="Arnaud M.B."/>
            <person name="Bates S."/>
            <person name="Brown A.J.P."/>
            <person name="Brunke S."/>
            <person name="Costanzo M.C."/>
            <person name="Fitzpatrick D.A."/>
            <person name="de Groot P.W.J."/>
            <person name="Harris D."/>
            <person name="Hoyer L.L."/>
            <person name="Hube B."/>
            <person name="Klis F.M."/>
            <person name="Kodira C."/>
            <person name="Lennard N."/>
            <person name="Logue M.E."/>
            <person name="Martin R."/>
            <person name="Neiman A.M."/>
            <person name="Nikolaou E."/>
            <person name="Quail M.A."/>
            <person name="Quinn J."/>
            <person name="Santos M.C."/>
            <person name="Schmitzberger F.F."/>
            <person name="Sherlock G."/>
            <person name="Shah P."/>
            <person name="Silverstein K.A.T."/>
            <person name="Skrzypek M.S."/>
            <person name="Soll D."/>
            <person name="Staggs R."/>
            <person name="Stansfield I."/>
            <person name="Stumpf M.P.H."/>
            <person name="Sudbery P.E."/>
            <person name="Srikantha T."/>
            <person name="Zeng Q."/>
            <person name="Berman J."/>
            <person name="Berriman M."/>
            <person name="Heitman J."/>
            <person name="Gow N.A.R."/>
            <person name="Lorenz M.C."/>
            <person name="Birren B.W."/>
            <person name="Kellis M."/>
            <person name="Cuomo C.A."/>
        </authorList>
    </citation>
    <scope>NUCLEOTIDE SEQUENCE [LARGE SCALE GENOMIC DNA]</scope>
    <source>
        <strain>ATCC MYA-3404 / T1</strain>
    </source>
</reference>
<accession>C5MFP8</accession>
<dbReference type="EC" id="3.4.16.6"/>
<dbReference type="EMBL" id="GG692401">
    <property type="protein sequence ID" value="EER31161.1"/>
    <property type="molecule type" value="Genomic_DNA"/>
</dbReference>
<dbReference type="RefSeq" id="XP_002550593.1">
    <property type="nucleotide sequence ID" value="XM_002550547.1"/>
</dbReference>
<dbReference type="SMR" id="C5MFP8"/>
<dbReference type="STRING" id="294747.C5MFP8"/>
<dbReference type="ESTHER" id="cantt-kex1">
    <property type="family name" value="Carboxypeptidase_S10"/>
</dbReference>
<dbReference type="MEROPS" id="S10.007"/>
<dbReference type="GlyCosmos" id="C5MFP8">
    <property type="glycosylation" value="6 sites, No reported glycans"/>
</dbReference>
<dbReference type="EnsemblFungi" id="CTRG_04891-t43_1">
    <property type="protein sequence ID" value="CTRG_04891-t43_1-p1"/>
    <property type="gene ID" value="CTRG_04891"/>
</dbReference>
<dbReference type="GeneID" id="8298894"/>
<dbReference type="KEGG" id="ctp:CTRG_04891"/>
<dbReference type="VEuPathDB" id="FungiDB:CTRG_04891"/>
<dbReference type="eggNOG" id="KOG1282">
    <property type="taxonomic scope" value="Eukaryota"/>
</dbReference>
<dbReference type="HOGENOM" id="CLU_008523_11_2_1"/>
<dbReference type="OrthoDB" id="443318at2759"/>
<dbReference type="Proteomes" id="UP000002037">
    <property type="component" value="Unassembled WGS sequence"/>
</dbReference>
<dbReference type="GO" id="GO:0016020">
    <property type="term" value="C:membrane"/>
    <property type="evidence" value="ECO:0007669"/>
    <property type="project" value="UniProtKB-KW"/>
</dbReference>
<dbReference type="GO" id="GO:0005802">
    <property type="term" value="C:trans-Golgi network"/>
    <property type="evidence" value="ECO:0007669"/>
    <property type="project" value="TreeGrafter"/>
</dbReference>
<dbReference type="GO" id="GO:0004185">
    <property type="term" value="F:serine-type carboxypeptidase activity"/>
    <property type="evidence" value="ECO:0007669"/>
    <property type="project" value="UniProtKB-EC"/>
</dbReference>
<dbReference type="GO" id="GO:0006915">
    <property type="term" value="P:apoptotic process"/>
    <property type="evidence" value="ECO:0007669"/>
    <property type="project" value="UniProtKB-KW"/>
</dbReference>
<dbReference type="GO" id="GO:0006508">
    <property type="term" value="P:proteolysis"/>
    <property type="evidence" value="ECO:0007669"/>
    <property type="project" value="UniProtKB-KW"/>
</dbReference>
<dbReference type="Gene3D" id="3.40.50.1820">
    <property type="entry name" value="alpha/beta hydrolase"/>
    <property type="match status" value="1"/>
</dbReference>
<dbReference type="InterPro" id="IPR029058">
    <property type="entry name" value="AB_hydrolase_fold"/>
</dbReference>
<dbReference type="InterPro" id="IPR001563">
    <property type="entry name" value="Peptidase_S10"/>
</dbReference>
<dbReference type="InterPro" id="IPR033124">
    <property type="entry name" value="Ser_caboxypep_his_AS"/>
</dbReference>
<dbReference type="PANTHER" id="PTHR11802:SF190">
    <property type="entry name" value="PHEROMONE-PROCESSING CARBOXYPEPTIDASE KEX1"/>
    <property type="match status" value="1"/>
</dbReference>
<dbReference type="PANTHER" id="PTHR11802">
    <property type="entry name" value="SERINE PROTEASE FAMILY S10 SERINE CARBOXYPEPTIDASE"/>
    <property type="match status" value="1"/>
</dbReference>
<dbReference type="Pfam" id="PF00450">
    <property type="entry name" value="Peptidase_S10"/>
    <property type="match status" value="1"/>
</dbReference>
<dbReference type="PRINTS" id="PR00724">
    <property type="entry name" value="CRBOXYPTASEC"/>
</dbReference>
<dbReference type="SUPFAM" id="SSF53474">
    <property type="entry name" value="alpha/beta-Hydrolases"/>
    <property type="match status" value="1"/>
</dbReference>
<dbReference type="PROSITE" id="PS00560">
    <property type="entry name" value="CARBOXYPEPT_SER_HIS"/>
    <property type="match status" value="1"/>
</dbReference>